<dbReference type="EMBL" id="AE015928">
    <property type="protein sequence ID" value="AAO77111.1"/>
    <property type="molecule type" value="Genomic_DNA"/>
</dbReference>
<dbReference type="RefSeq" id="NP_810917.1">
    <property type="nucleotide sequence ID" value="NC_004663.1"/>
</dbReference>
<dbReference type="RefSeq" id="WP_008761107.1">
    <property type="nucleotide sequence ID" value="NC_004663.1"/>
</dbReference>
<dbReference type="SMR" id="Q8A682"/>
<dbReference type="FunCoup" id="Q8A682">
    <property type="interactions" value="382"/>
</dbReference>
<dbReference type="STRING" id="226186.BT_2004"/>
<dbReference type="PaxDb" id="226186-BT_2004"/>
<dbReference type="DNASU" id="1074179"/>
<dbReference type="EnsemblBacteria" id="AAO77111">
    <property type="protein sequence ID" value="AAO77111"/>
    <property type="gene ID" value="BT_2004"/>
</dbReference>
<dbReference type="GeneID" id="60927989"/>
<dbReference type="KEGG" id="bth:BT_2004"/>
<dbReference type="PATRIC" id="fig|226186.12.peg.2056"/>
<dbReference type="eggNOG" id="COG0806">
    <property type="taxonomic scope" value="Bacteria"/>
</dbReference>
<dbReference type="HOGENOM" id="CLU_077636_4_1_10"/>
<dbReference type="InParanoid" id="Q8A682"/>
<dbReference type="OrthoDB" id="9810331at2"/>
<dbReference type="Proteomes" id="UP000001414">
    <property type="component" value="Chromosome"/>
</dbReference>
<dbReference type="GO" id="GO:0005829">
    <property type="term" value="C:cytosol"/>
    <property type="evidence" value="ECO:0000318"/>
    <property type="project" value="GO_Central"/>
</dbReference>
<dbReference type="GO" id="GO:0005840">
    <property type="term" value="C:ribosome"/>
    <property type="evidence" value="ECO:0007669"/>
    <property type="project" value="InterPro"/>
</dbReference>
<dbReference type="GO" id="GO:0043022">
    <property type="term" value="F:ribosome binding"/>
    <property type="evidence" value="ECO:0007669"/>
    <property type="project" value="InterPro"/>
</dbReference>
<dbReference type="GO" id="GO:0030490">
    <property type="term" value="P:maturation of SSU-rRNA"/>
    <property type="evidence" value="ECO:0000318"/>
    <property type="project" value="GO_Central"/>
</dbReference>
<dbReference type="Gene3D" id="2.30.30.240">
    <property type="entry name" value="PRC-barrel domain"/>
    <property type="match status" value="1"/>
</dbReference>
<dbReference type="Gene3D" id="2.40.30.60">
    <property type="entry name" value="RimM"/>
    <property type="match status" value="1"/>
</dbReference>
<dbReference type="HAMAP" id="MF_00014">
    <property type="entry name" value="Ribosome_mat_RimM"/>
    <property type="match status" value="1"/>
</dbReference>
<dbReference type="InterPro" id="IPR011033">
    <property type="entry name" value="PRC_barrel-like_sf"/>
</dbReference>
<dbReference type="InterPro" id="IPR056792">
    <property type="entry name" value="PRC_RimM"/>
</dbReference>
<dbReference type="InterPro" id="IPR011961">
    <property type="entry name" value="RimM"/>
</dbReference>
<dbReference type="InterPro" id="IPR002676">
    <property type="entry name" value="RimM_N"/>
</dbReference>
<dbReference type="InterPro" id="IPR036976">
    <property type="entry name" value="RimM_N_sf"/>
</dbReference>
<dbReference type="InterPro" id="IPR009000">
    <property type="entry name" value="Transl_B-barrel_sf"/>
</dbReference>
<dbReference type="NCBIfam" id="TIGR02273">
    <property type="entry name" value="16S_RimM"/>
    <property type="match status" value="1"/>
</dbReference>
<dbReference type="PANTHER" id="PTHR33692">
    <property type="entry name" value="RIBOSOME MATURATION FACTOR RIMM"/>
    <property type="match status" value="1"/>
</dbReference>
<dbReference type="PANTHER" id="PTHR33692:SF1">
    <property type="entry name" value="RIBOSOME MATURATION FACTOR RIMM"/>
    <property type="match status" value="1"/>
</dbReference>
<dbReference type="Pfam" id="PF24986">
    <property type="entry name" value="PRC_RimM"/>
    <property type="match status" value="1"/>
</dbReference>
<dbReference type="Pfam" id="PF01782">
    <property type="entry name" value="RimM"/>
    <property type="match status" value="1"/>
</dbReference>
<dbReference type="SUPFAM" id="SSF50346">
    <property type="entry name" value="PRC-barrel domain"/>
    <property type="match status" value="1"/>
</dbReference>
<dbReference type="SUPFAM" id="SSF50447">
    <property type="entry name" value="Translation proteins"/>
    <property type="match status" value="1"/>
</dbReference>
<accession>Q8A682</accession>
<evidence type="ECO:0000255" key="1">
    <source>
        <dbReference type="HAMAP-Rule" id="MF_00014"/>
    </source>
</evidence>
<sequence>MIKKEEVYKIGLFNKPHGIHGELQFTFTDDIFDRVDCDYLICLLDGIFVPFFIEEYRFRSDSTALVKLEGIDTAERARMFTNVEVYFPVKHAEEAEDGELSWNFFVGFRMEDVRHGELGEVVEVDTATVNTLFVVEQEDGEELLVPAQEEFIVEINQEKKLITVELPEGLLNLEDLEED</sequence>
<reference key="1">
    <citation type="journal article" date="2003" name="Science">
        <title>A genomic view of the human-Bacteroides thetaiotaomicron symbiosis.</title>
        <authorList>
            <person name="Xu J."/>
            <person name="Bjursell M.K."/>
            <person name="Himrod J."/>
            <person name="Deng S."/>
            <person name="Carmichael L.K."/>
            <person name="Chiang H.C."/>
            <person name="Hooper L.V."/>
            <person name="Gordon J.I."/>
        </authorList>
    </citation>
    <scope>NUCLEOTIDE SEQUENCE [LARGE SCALE GENOMIC DNA]</scope>
    <source>
        <strain>ATCC 29148 / DSM 2079 / JCM 5827 / CCUG 10774 / NCTC 10582 / VPI-5482 / E50</strain>
    </source>
</reference>
<gene>
    <name evidence="1" type="primary">rimM</name>
    <name type="ordered locus">BT_2004</name>
</gene>
<name>RIMM_BACTN</name>
<protein>
    <recommendedName>
        <fullName evidence="1">Ribosome maturation factor RimM</fullName>
    </recommendedName>
</protein>
<organism>
    <name type="scientific">Bacteroides thetaiotaomicron (strain ATCC 29148 / DSM 2079 / JCM 5827 / CCUG 10774 / NCTC 10582 / VPI-5482 / E50)</name>
    <dbReference type="NCBI Taxonomy" id="226186"/>
    <lineage>
        <taxon>Bacteria</taxon>
        <taxon>Pseudomonadati</taxon>
        <taxon>Bacteroidota</taxon>
        <taxon>Bacteroidia</taxon>
        <taxon>Bacteroidales</taxon>
        <taxon>Bacteroidaceae</taxon>
        <taxon>Bacteroides</taxon>
    </lineage>
</organism>
<feature type="chain" id="PRO_0000163253" description="Ribosome maturation factor RimM">
    <location>
        <begin position="1"/>
        <end position="179"/>
    </location>
</feature>
<feature type="domain" description="PRC barrel" evidence="1">
    <location>
        <begin position="97"/>
        <end position="170"/>
    </location>
</feature>
<comment type="function">
    <text evidence="1">An accessory protein needed during the final step in the assembly of 30S ribosomal subunit, possibly for assembly of the head region. Essential for efficient processing of 16S rRNA. May be needed both before and after RbfA during the maturation of 16S rRNA. It has affinity for free ribosomal 30S subunits but not for 70S ribosomes.</text>
</comment>
<comment type="subunit">
    <text evidence="1">Binds ribosomal protein uS19.</text>
</comment>
<comment type="subcellular location">
    <subcellularLocation>
        <location evidence="1">Cytoplasm</location>
    </subcellularLocation>
</comment>
<comment type="domain">
    <text evidence="1">The PRC barrel domain binds ribosomal protein uS19.</text>
</comment>
<comment type="similarity">
    <text evidence="1">Belongs to the RimM family.</text>
</comment>
<keyword id="KW-0143">Chaperone</keyword>
<keyword id="KW-0963">Cytoplasm</keyword>
<keyword id="KW-1185">Reference proteome</keyword>
<keyword id="KW-0690">Ribosome biogenesis</keyword>
<keyword id="KW-0698">rRNA processing</keyword>
<proteinExistence type="inferred from homology"/>